<reference key="1">
    <citation type="journal article" date="2009" name="PLoS Genet.">
        <title>Organised genome dynamics in the Escherichia coli species results in highly diverse adaptive paths.</title>
        <authorList>
            <person name="Touchon M."/>
            <person name="Hoede C."/>
            <person name="Tenaillon O."/>
            <person name="Barbe V."/>
            <person name="Baeriswyl S."/>
            <person name="Bidet P."/>
            <person name="Bingen E."/>
            <person name="Bonacorsi S."/>
            <person name="Bouchier C."/>
            <person name="Bouvet O."/>
            <person name="Calteau A."/>
            <person name="Chiapello H."/>
            <person name="Clermont O."/>
            <person name="Cruveiller S."/>
            <person name="Danchin A."/>
            <person name="Diard M."/>
            <person name="Dossat C."/>
            <person name="Karoui M.E."/>
            <person name="Frapy E."/>
            <person name="Garry L."/>
            <person name="Ghigo J.M."/>
            <person name="Gilles A.M."/>
            <person name="Johnson J."/>
            <person name="Le Bouguenec C."/>
            <person name="Lescat M."/>
            <person name="Mangenot S."/>
            <person name="Martinez-Jehanne V."/>
            <person name="Matic I."/>
            <person name="Nassif X."/>
            <person name="Oztas S."/>
            <person name="Petit M.A."/>
            <person name="Pichon C."/>
            <person name="Rouy Z."/>
            <person name="Ruf C.S."/>
            <person name="Schneider D."/>
            <person name="Tourret J."/>
            <person name="Vacherie B."/>
            <person name="Vallenet D."/>
            <person name="Medigue C."/>
            <person name="Rocha E.P.C."/>
            <person name="Denamur E."/>
        </authorList>
    </citation>
    <scope>NUCLEOTIDE SEQUENCE [LARGE SCALE GENOMIC DNA]</scope>
    <source>
        <strain>55989 / EAEC</strain>
    </source>
</reference>
<feature type="chain" id="PRO_1000194291" description="Small ribosomal subunit protein bS21">
    <location>
        <begin position="1"/>
        <end position="71"/>
    </location>
</feature>
<feature type="region of interest" description="Disordered" evidence="2">
    <location>
        <begin position="43"/>
        <end position="71"/>
    </location>
</feature>
<feature type="compositionally biased region" description="Basic residues" evidence="2">
    <location>
        <begin position="46"/>
        <end position="59"/>
    </location>
</feature>
<feature type="compositionally biased region" description="Basic and acidic residues" evidence="2">
    <location>
        <begin position="60"/>
        <end position="71"/>
    </location>
</feature>
<organism>
    <name type="scientific">Escherichia coli (strain 55989 / EAEC)</name>
    <dbReference type="NCBI Taxonomy" id="585055"/>
    <lineage>
        <taxon>Bacteria</taxon>
        <taxon>Pseudomonadati</taxon>
        <taxon>Pseudomonadota</taxon>
        <taxon>Gammaproteobacteria</taxon>
        <taxon>Enterobacterales</taxon>
        <taxon>Enterobacteriaceae</taxon>
        <taxon>Escherichia</taxon>
    </lineage>
</organism>
<gene>
    <name evidence="1" type="primary">rpsU</name>
    <name type="ordered locus">EC55989_3480</name>
</gene>
<protein>
    <recommendedName>
        <fullName evidence="1">Small ribosomal subunit protein bS21</fullName>
    </recommendedName>
    <alternativeName>
        <fullName evidence="3">30S ribosomal protein S21</fullName>
    </alternativeName>
</protein>
<keyword id="KW-1185">Reference proteome</keyword>
<keyword id="KW-0687">Ribonucleoprotein</keyword>
<keyword id="KW-0689">Ribosomal protein</keyword>
<dbReference type="EMBL" id="CU928145">
    <property type="protein sequence ID" value="CAU99619.1"/>
    <property type="molecule type" value="Genomic_DNA"/>
</dbReference>
<dbReference type="RefSeq" id="WP_001144069.1">
    <property type="nucleotide sequence ID" value="NZ_CP028304.1"/>
</dbReference>
<dbReference type="SMR" id="B7LH01"/>
<dbReference type="GeneID" id="98390195"/>
<dbReference type="KEGG" id="eck:EC55989_3480"/>
<dbReference type="HOGENOM" id="CLU_159258_1_0_6"/>
<dbReference type="Proteomes" id="UP000000746">
    <property type="component" value="Chromosome"/>
</dbReference>
<dbReference type="GO" id="GO:1990904">
    <property type="term" value="C:ribonucleoprotein complex"/>
    <property type="evidence" value="ECO:0007669"/>
    <property type="project" value="UniProtKB-KW"/>
</dbReference>
<dbReference type="GO" id="GO:0005840">
    <property type="term" value="C:ribosome"/>
    <property type="evidence" value="ECO:0007669"/>
    <property type="project" value="UniProtKB-KW"/>
</dbReference>
<dbReference type="GO" id="GO:0003735">
    <property type="term" value="F:structural constituent of ribosome"/>
    <property type="evidence" value="ECO:0007669"/>
    <property type="project" value="InterPro"/>
</dbReference>
<dbReference type="GO" id="GO:0006412">
    <property type="term" value="P:translation"/>
    <property type="evidence" value="ECO:0007669"/>
    <property type="project" value="UniProtKB-UniRule"/>
</dbReference>
<dbReference type="FunFam" id="1.20.5.1150:FF:000001">
    <property type="entry name" value="30S ribosomal protein S21"/>
    <property type="match status" value="1"/>
</dbReference>
<dbReference type="Gene3D" id="1.20.5.1150">
    <property type="entry name" value="Ribosomal protein S8"/>
    <property type="match status" value="1"/>
</dbReference>
<dbReference type="HAMAP" id="MF_00358">
    <property type="entry name" value="Ribosomal_bS21"/>
    <property type="match status" value="1"/>
</dbReference>
<dbReference type="InterPro" id="IPR001911">
    <property type="entry name" value="Ribosomal_bS21"/>
</dbReference>
<dbReference type="InterPro" id="IPR018278">
    <property type="entry name" value="Ribosomal_bS21_CS"/>
</dbReference>
<dbReference type="InterPro" id="IPR038380">
    <property type="entry name" value="Ribosomal_bS21_sf"/>
</dbReference>
<dbReference type="NCBIfam" id="TIGR00030">
    <property type="entry name" value="S21p"/>
    <property type="match status" value="1"/>
</dbReference>
<dbReference type="PANTHER" id="PTHR21109">
    <property type="entry name" value="MITOCHONDRIAL 28S RIBOSOMAL PROTEIN S21"/>
    <property type="match status" value="1"/>
</dbReference>
<dbReference type="PANTHER" id="PTHR21109:SF22">
    <property type="entry name" value="SMALL RIBOSOMAL SUBUNIT PROTEIN BS21"/>
    <property type="match status" value="1"/>
</dbReference>
<dbReference type="Pfam" id="PF01165">
    <property type="entry name" value="Ribosomal_S21"/>
    <property type="match status" value="1"/>
</dbReference>
<dbReference type="PRINTS" id="PR00976">
    <property type="entry name" value="RIBOSOMALS21"/>
</dbReference>
<dbReference type="PROSITE" id="PS01181">
    <property type="entry name" value="RIBOSOMAL_S21"/>
    <property type="match status" value="1"/>
</dbReference>
<comment type="similarity">
    <text evidence="1">Belongs to the bacterial ribosomal protein bS21 family.</text>
</comment>
<name>RS21_ECO55</name>
<accession>B7LH01</accession>
<evidence type="ECO:0000255" key="1">
    <source>
        <dbReference type="HAMAP-Rule" id="MF_00358"/>
    </source>
</evidence>
<evidence type="ECO:0000256" key="2">
    <source>
        <dbReference type="SAM" id="MobiDB-lite"/>
    </source>
</evidence>
<evidence type="ECO:0000305" key="3"/>
<proteinExistence type="inferred from homology"/>
<sequence>MPVIKVRENEPFDVALRRFKRSCEKAGVLAEVRRREFYEKPTTERKRAKASAVKRHAKKLARENARRTRLY</sequence>